<comment type="function">
    <text>Hormone found in the sinus gland of isopods and decapods which controls the blood sugar level. Has a secretagogue action over the amylase released from the midgut gland. May act as a stress hormone and may be involved in the control of molting and reproduction.</text>
</comment>
<comment type="subcellular location">
    <subcellularLocation>
        <location>Secreted</location>
    </subcellularLocation>
</comment>
<comment type="tissue specificity">
    <text>Produced by the medulla terminalis X-organ in the eyestalks and transported to the sinus gland where they are stored and released. Present also in the ventral nervous system.</text>
</comment>
<comment type="PTM">
    <text evidence="4">Stereoinversion of L-Phe (form CHH-B-I) to D-Phe (form CHH-B-II).</text>
</comment>
<comment type="similarity">
    <text evidence="5">Belongs to the arthropod CHH/MIH/GIH/VIH hormone family.</text>
</comment>
<sequence>MFACRTLCLVVVMVASLGTSGVGGRSVEGVSRMEKLLSSSISPSSTPLGFLSQDHSVNKRQVFDQACKGVYDRNLFKKLNRVCEDCYNLYRKPFIVTTCRENCYSNRVFRQCLDDLLLSDVIDEYVSNVQMVGK</sequence>
<dbReference type="EMBL" id="X54843">
    <property type="protein sequence ID" value="CAA38612.1"/>
    <property type="molecule type" value="mRNA"/>
</dbReference>
<dbReference type="PIR" id="S52118">
    <property type="entry name" value="S52118"/>
</dbReference>
<dbReference type="SMR" id="Q25154"/>
<dbReference type="OrthoDB" id="6360056at2759"/>
<dbReference type="GO" id="GO:0005576">
    <property type="term" value="C:extracellular region"/>
    <property type="evidence" value="ECO:0007669"/>
    <property type="project" value="UniProtKB-SubCell"/>
</dbReference>
<dbReference type="GO" id="GO:0005184">
    <property type="term" value="F:neuropeptide hormone activity"/>
    <property type="evidence" value="ECO:0007669"/>
    <property type="project" value="InterPro"/>
</dbReference>
<dbReference type="GO" id="GO:0007623">
    <property type="term" value="P:circadian rhythm"/>
    <property type="evidence" value="ECO:0007669"/>
    <property type="project" value="TreeGrafter"/>
</dbReference>
<dbReference type="GO" id="GO:0006006">
    <property type="term" value="P:glucose metabolic process"/>
    <property type="evidence" value="ECO:0007669"/>
    <property type="project" value="UniProtKB-KW"/>
</dbReference>
<dbReference type="GO" id="GO:0007218">
    <property type="term" value="P:neuropeptide signaling pathway"/>
    <property type="evidence" value="ECO:0007669"/>
    <property type="project" value="UniProtKB-KW"/>
</dbReference>
<dbReference type="Gene3D" id="1.10.2010.10">
    <property type="entry name" value="Crustacean CHH/MIH/GIH neurohormone"/>
    <property type="match status" value="1"/>
</dbReference>
<dbReference type="InterPro" id="IPR018251">
    <property type="entry name" value="Crust_neurhormone_CS"/>
</dbReference>
<dbReference type="InterPro" id="IPR031098">
    <property type="entry name" value="Crust_neurohorm"/>
</dbReference>
<dbReference type="InterPro" id="IPR035957">
    <property type="entry name" value="Crust_neurohorm_sf"/>
</dbReference>
<dbReference type="InterPro" id="IPR001166">
    <property type="entry name" value="Hyperglycemic"/>
</dbReference>
<dbReference type="InterPro" id="IPR000346">
    <property type="entry name" value="Hyperglycemic1"/>
</dbReference>
<dbReference type="PANTHER" id="PTHR35981">
    <property type="entry name" value="ION TRANSPORT PEPTIDE, ISOFORM C"/>
    <property type="match status" value="1"/>
</dbReference>
<dbReference type="PANTHER" id="PTHR35981:SF2">
    <property type="entry name" value="ION TRANSPORT PEPTIDE, ISOFORM C"/>
    <property type="match status" value="1"/>
</dbReference>
<dbReference type="Pfam" id="PF01147">
    <property type="entry name" value="Crust_neurohorm"/>
    <property type="match status" value="1"/>
</dbReference>
<dbReference type="PRINTS" id="PR00548">
    <property type="entry name" value="HYPRGLYCEMC1"/>
</dbReference>
<dbReference type="PRINTS" id="PR00550">
    <property type="entry name" value="HYPRGLYCEMIC"/>
</dbReference>
<dbReference type="SUPFAM" id="SSF81778">
    <property type="entry name" value="Crustacean CHH/MIH/GIH neurohormone"/>
    <property type="match status" value="1"/>
</dbReference>
<dbReference type="PROSITE" id="PS01250">
    <property type="entry name" value="CHH_MIH_GIH"/>
    <property type="match status" value="1"/>
</dbReference>
<keyword id="KW-0027">Amidation</keyword>
<keyword id="KW-0119">Carbohydrate metabolism</keyword>
<keyword id="KW-0165">Cleavage on pair of basic residues</keyword>
<keyword id="KW-0208">D-amino acid</keyword>
<keyword id="KW-0903">Direct protein sequencing</keyword>
<keyword id="KW-1015">Disulfide bond</keyword>
<keyword id="KW-0313">Glucose metabolism</keyword>
<keyword id="KW-0372">Hormone</keyword>
<keyword id="KW-0527">Neuropeptide</keyword>
<keyword id="KW-0873">Pyrrolidone carboxylic acid</keyword>
<keyword id="KW-0964">Secreted</keyword>
<keyword id="KW-0732">Signal</keyword>
<proteinExistence type="evidence at protein level"/>
<evidence type="ECO:0000250" key="1"/>
<evidence type="ECO:0000269" key="2">
    <source>
    </source>
</evidence>
<evidence type="ECO:0000269" key="3">
    <source>
    </source>
</evidence>
<evidence type="ECO:0000269" key="4">
    <source>
    </source>
</evidence>
<evidence type="ECO:0000305" key="5"/>
<name>CHHB_HOMAM</name>
<accession>Q25154</accession>
<feature type="signal peptide" evidence="2">
    <location>
        <begin position="1"/>
        <end position="24"/>
    </location>
</feature>
<feature type="peptide" id="PRO_0000019041" description="CHH precursor-related peptide B">
    <location>
        <begin position="25"/>
        <end position="58"/>
    </location>
</feature>
<feature type="peptide" id="PRO_0000019042" description="Crustacean hyperglycemic hormone B">
    <location>
        <begin position="61"/>
        <end position="132"/>
    </location>
</feature>
<feature type="modified residue" description="Pyrrolidone carboxylic acid" evidence="4">
    <location>
        <position position="61"/>
    </location>
</feature>
<feature type="modified residue" description="D-phenylalanine; in form CHH-B-II" evidence="4">
    <location>
        <position position="63"/>
    </location>
</feature>
<feature type="modified residue" description="Valine amide" evidence="3">
    <location>
        <position position="132"/>
    </location>
</feature>
<feature type="disulfide bond" evidence="1">
    <location>
        <begin position="67"/>
        <end position="103"/>
    </location>
</feature>
<feature type="disulfide bond" evidence="1">
    <location>
        <begin position="83"/>
        <end position="99"/>
    </location>
</feature>
<feature type="disulfide bond" evidence="1">
    <location>
        <begin position="86"/>
        <end position="112"/>
    </location>
</feature>
<feature type="sequence conflict" description="In Ref. 3; AA sequence." evidence="5" ref="3">
    <location>
        <position position="40"/>
    </location>
</feature>
<feature type="sequence conflict" description="In Ref. 2; CAA38612." evidence="5" ref="2">
    <original>LS</original>
    <variation>MI</variation>
    <location>
        <begin position="118"/>
        <end position="119"/>
    </location>
</feature>
<feature type="sequence conflict" description="In Ref. 2; CAA38612." evidence="5" ref="2">
    <original>G</original>
    <variation>P</variation>
    <location>
        <position position="133"/>
    </location>
</feature>
<protein>
    <recommendedName>
        <fullName>Crustacean hyperglycemic hormones isoform B</fullName>
    </recommendedName>
    <component>
        <recommendedName>
            <fullName>CHH precursor-related peptide B</fullName>
            <shortName>CPRP-B</shortName>
        </recommendedName>
    </component>
    <component>
        <recommendedName>
            <fullName>Crustacean hyperglycemic hormone B</fullName>
            <shortName>CHH-B</shortName>
        </recommendedName>
    </component>
</protein>
<organism>
    <name type="scientific">Homarus americanus</name>
    <name type="common">American lobster</name>
    <dbReference type="NCBI Taxonomy" id="6706"/>
    <lineage>
        <taxon>Eukaryota</taxon>
        <taxon>Metazoa</taxon>
        <taxon>Ecdysozoa</taxon>
        <taxon>Arthropoda</taxon>
        <taxon>Crustacea</taxon>
        <taxon>Multicrustacea</taxon>
        <taxon>Malacostraca</taxon>
        <taxon>Eumalacostraca</taxon>
        <taxon>Eucarida</taxon>
        <taxon>Decapoda</taxon>
        <taxon>Pleocyemata</taxon>
        <taxon>Astacidea</taxon>
        <taxon>Nephropoidea</taxon>
        <taxon>Nephropidae</taxon>
        <taxon>Homarus</taxon>
    </lineage>
</organism>
<reference key="1">
    <citation type="journal article" date="1995" name="Biochim. Biophys. Acta">
        <title>Cloning and expression of two mRNAs encoding structurally different crustacean hyperglycemic hormone precursors in the lobster Homarus americanus.</title>
        <authorList>
            <person name="de Kleijn D.P.V."/>
            <person name="de Leeuw E.P.H."/>
            <person name="van den Berg M.C."/>
            <person name="Martens G.J.M."/>
            <person name="van Herp F."/>
        </authorList>
    </citation>
    <scope>NUCLEOTIDE SEQUENCE [MRNA]</scope>
</reference>
<reference key="2">
    <citation type="journal article" date="1991" name="Eur. J. Biochem.">
        <title>Cloning and sequence analysis of cDNA encoding two crustacean hyperglycemic hormones from the lobster Homarus americanus.</title>
        <authorList>
            <person name="Tensen C.P."/>
            <person name="de Kleijn D.P.V."/>
            <person name="van Herp F."/>
        </authorList>
    </citation>
    <scope>NUCLEOTIDE SEQUENCE [MRNA] OF 61-133</scope>
    <scope>AMIDATION AT VAL-132</scope>
    <source>
        <tissue>Eyestalk</tissue>
    </source>
</reference>
<reference key="3">
    <citation type="journal article" date="1991" name="Peptides">
        <title>Isolation and amino acid sequence of crustacean hyperglycemic hormone precursor-related peptides.</title>
        <authorList>
            <person name="Tensen C.P."/>
            <person name="Verhoeven A.H.M."/>
            <person name="Gaus G."/>
            <person name="Janssen K.P.C."/>
            <person name="Keller R."/>
            <person name="van Herp F."/>
        </authorList>
    </citation>
    <scope>PROTEIN SEQUENCE OF 25-58</scope>
    <source>
        <tissue>Sinus gland</tissue>
    </source>
</reference>
<reference key="4">
    <citation type="journal article" date="1994" name="J. Biol. Chem.">
        <title>Evidence for a conformational polymorphism of invertebrate neurohormones. D-amino acid residue in crustacean hyperglycemic peptides.</title>
        <authorList>
            <person name="Soyez D."/>
            <person name="van Herp F."/>
            <person name="Rossier J."/>
            <person name="Le Caer J.-P."/>
            <person name="Tensen C.P."/>
            <person name="Lafont R."/>
        </authorList>
    </citation>
    <scope>PROTEIN SEQUENCE OF 61-68</scope>
    <scope>PYROGLUTAMATE FORMATION AT GLN-61</scope>
    <scope>D-AMINO ACID AT PHE-63</scope>
</reference>